<keyword id="KW-0929">Antimicrobial</keyword>
<keyword id="KW-0081">Bacteriolytic enzyme</keyword>
<keyword id="KW-1015">Disulfide bond</keyword>
<keyword id="KW-0326">Glycosidase</keyword>
<keyword id="KW-0378">Hydrolase</keyword>
<keyword id="KW-0964">Secreted</keyword>
<keyword id="KW-0732">Signal</keyword>
<gene>
    <name type="primary">LYZ</name>
    <name type="synonym">LZM</name>
</gene>
<evidence type="ECO:0000250" key="1"/>
<evidence type="ECO:0000255" key="2">
    <source>
        <dbReference type="PROSITE-ProRule" id="PRU00680"/>
    </source>
</evidence>
<protein>
    <recommendedName>
        <fullName>Lysozyme C</fullName>
        <ecNumber>3.2.1.17</ecNumber>
    </recommendedName>
    <alternativeName>
        <fullName>1,4-beta-N-acetylmuramidase C</fullName>
    </alternativeName>
</protein>
<organism>
    <name type="scientific">Miopithecus talapoin</name>
    <name type="common">Angolan talapoin</name>
    <name type="synonym">Cercopithecus talapoin</name>
    <dbReference type="NCBI Taxonomy" id="36231"/>
    <lineage>
        <taxon>Eukaryota</taxon>
        <taxon>Metazoa</taxon>
        <taxon>Chordata</taxon>
        <taxon>Craniata</taxon>
        <taxon>Vertebrata</taxon>
        <taxon>Euteleostomi</taxon>
        <taxon>Mammalia</taxon>
        <taxon>Eutheria</taxon>
        <taxon>Euarchontoglires</taxon>
        <taxon>Primates</taxon>
        <taxon>Haplorrhini</taxon>
        <taxon>Catarrhini</taxon>
        <taxon>Cercopithecidae</taxon>
        <taxon>Cercopithecinae</taxon>
        <taxon>Miopithecus</taxon>
    </lineage>
</organism>
<feature type="signal peptide" evidence="1">
    <location>
        <begin position="1"/>
        <end position="18"/>
    </location>
</feature>
<feature type="chain" id="PRO_0000018471" description="Lysozyme C">
    <location>
        <begin position="19"/>
        <end position="148"/>
    </location>
</feature>
<feature type="domain" description="C-type lysozyme" evidence="2">
    <location>
        <begin position="19"/>
        <end position="148"/>
    </location>
</feature>
<feature type="active site" evidence="2">
    <location>
        <position position="53"/>
    </location>
</feature>
<feature type="active site" evidence="2">
    <location>
        <position position="71"/>
    </location>
</feature>
<feature type="disulfide bond" evidence="2">
    <location>
        <begin position="24"/>
        <end position="146"/>
    </location>
</feature>
<feature type="disulfide bond" evidence="2">
    <location>
        <begin position="48"/>
        <end position="134"/>
    </location>
</feature>
<feature type="disulfide bond" evidence="2">
    <location>
        <begin position="83"/>
        <end position="99"/>
    </location>
</feature>
<feature type="disulfide bond" evidence="2">
    <location>
        <begin position="95"/>
        <end position="113"/>
    </location>
</feature>
<sequence>MKAVIILGLVLLSVTVQGKIFERCELARTLKRLGLDGYRGISLANWVCLAKWESDYNTQATNYNPGDQSTDYGIFQINSHYWCNNGKTPGAVNACHISCNALLQDNIADAVTCAKRVVRDPQGIRAWVAWRNHCHNRDVSQYVQGCGV</sequence>
<reference key="1">
    <citation type="journal article" date="1997" name="Nature">
        <title>Episodic adaptive evolution of primate lysozymes.</title>
        <authorList>
            <person name="Messier W."/>
            <person name="Stewart C.B."/>
        </authorList>
    </citation>
    <scope>NUCLEOTIDE SEQUENCE [GENOMIC DNA]</scope>
    <source>
        <tissue>Blood</tissue>
    </source>
</reference>
<proteinExistence type="inferred from homology"/>
<name>LYSC_MIOTA</name>
<comment type="function">
    <text>Lysozymes have primarily a bacteriolytic function; those in tissues and body fluids are associated with the monocyte-macrophage system and enhance the activity of immunoagents.</text>
</comment>
<comment type="catalytic activity">
    <reaction>
        <text>Hydrolysis of (1-&gt;4)-beta-linkages between N-acetylmuramic acid and N-acetyl-D-glucosamine residues in a peptidoglycan and between N-acetyl-D-glucosamine residues in chitodextrins.</text>
        <dbReference type="EC" id="3.2.1.17"/>
    </reaction>
</comment>
<comment type="subunit">
    <text>Monomer.</text>
</comment>
<comment type="subcellular location">
    <subcellularLocation>
        <location evidence="1">Secreted</location>
    </subcellularLocation>
</comment>
<comment type="miscellaneous">
    <text>Lysozyme C is capable of both hydrolysis and transglycosylation; it also shows a slight esterase activity. It acts rapidly on both peptide-substituted and unsubstituted peptidoglycan, and slowly on chitin oligosaccharides.</text>
</comment>
<comment type="similarity">
    <text evidence="2">Belongs to the glycosyl hydrolase 22 family.</text>
</comment>
<accession>P79806</accession>
<dbReference type="EC" id="3.2.1.17"/>
<dbReference type="EMBL" id="U76955">
    <property type="protein sequence ID" value="AAB41220.1"/>
    <property type="molecule type" value="Genomic_DNA"/>
</dbReference>
<dbReference type="EMBL" id="U76952">
    <property type="protein sequence ID" value="AAB41220.1"/>
    <property type="status" value="JOINED"/>
    <property type="molecule type" value="Genomic_DNA"/>
</dbReference>
<dbReference type="EMBL" id="U76953">
    <property type="protein sequence ID" value="AAB41220.1"/>
    <property type="status" value="JOINED"/>
    <property type="molecule type" value="Genomic_DNA"/>
</dbReference>
<dbReference type="EMBL" id="U76954">
    <property type="protein sequence ID" value="AAB41220.1"/>
    <property type="status" value="JOINED"/>
    <property type="molecule type" value="Genomic_DNA"/>
</dbReference>
<dbReference type="SMR" id="P79806"/>
<dbReference type="CAZy" id="GH22">
    <property type="family name" value="Glycoside Hydrolase Family 22"/>
</dbReference>
<dbReference type="GO" id="GO:0005576">
    <property type="term" value="C:extracellular region"/>
    <property type="evidence" value="ECO:0007669"/>
    <property type="project" value="UniProtKB-SubCell"/>
</dbReference>
<dbReference type="GO" id="GO:0003796">
    <property type="term" value="F:lysozyme activity"/>
    <property type="evidence" value="ECO:0007669"/>
    <property type="project" value="UniProtKB-EC"/>
</dbReference>
<dbReference type="GO" id="GO:0050829">
    <property type="term" value="P:defense response to Gram-negative bacterium"/>
    <property type="evidence" value="ECO:0007669"/>
    <property type="project" value="TreeGrafter"/>
</dbReference>
<dbReference type="GO" id="GO:0050830">
    <property type="term" value="P:defense response to Gram-positive bacterium"/>
    <property type="evidence" value="ECO:0007669"/>
    <property type="project" value="TreeGrafter"/>
</dbReference>
<dbReference type="GO" id="GO:0031640">
    <property type="term" value="P:killing of cells of another organism"/>
    <property type="evidence" value="ECO:0007669"/>
    <property type="project" value="UniProtKB-KW"/>
</dbReference>
<dbReference type="CDD" id="cd16897">
    <property type="entry name" value="LYZ_C"/>
    <property type="match status" value="1"/>
</dbReference>
<dbReference type="FunFam" id="1.10.530.10:FF:000001">
    <property type="entry name" value="Lysozyme C"/>
    <property type="match status" value="1"/>
</dbReference>
<dbReference type="Gene3D" id="1.10.530.10">
    <property type="match status" value="1"/>
</dbReference>
<dbReference type="InterPro" id="IPR001916">
    <property type="entry name" value="Glyco_hydro_22"/>
</dbReference>
<dbReference type="InterPro" id="IPR019799">
    <property type="entry name" value="Glyco_hydro_22_CS"/>
</dbReference>
<dbReference type="InterPro" id="IPR000974">
    <property type="entry name" value="Glyco_hydro_22_lys"/>
</dbReference>
<dbReference type="InterPro" id="IPR023346">
    <property type="entry name" value="Lysozyme-like_dom_sf"/>
</dbReference>
<dbReference type="PANTHER" id="PTHR11407">
    <property type="entry name" value="LYSOZYME C"/>
    <property type="match status" value="1"/>
</dbReference>
<dbReference type="PANTHER" id="PTHR11407:SF28">
    <property type="entry name" value="LYSOZYME C"/>
    <property type="match status" value="1"/>
</dbReference>
<dbReference type="Pfam" id="PF00062">
    <property type="entry name" value="Lys"/>
    <property type="match status" value="1"/>
</dbReference>
<dbReference type="PRINTS" id="PR00137">
    <property type="entry name" value="LYSOZYME"/>
</dbReference>
<dbReference type="PRINTS" id="PR00135">
    <property type="entry name" value="LYZLACT"/>
</dbReference>
<dbReference type="SMART" id="SM00263">
    <property type="entry name" value="LYZ1"/>
    <property type="match status" value="1"/>
</dbReference>
<dbReference type="SUPFAM" id="SSF53955">
    <property type="entry name" value="Lysozyme-like"/>
    <property type="match status" value="1"/>
</dbReference>
<dbReference type="PROSITE" id="PS00128">
    <property type="entry name" value="GLYCOSYL_HYDROL_F22_1"/>
    <property type="match status" value="1"/>
</dbReference>
<dbReference type="PROSITE" id="PS51348">
    <property type="entry name" value="GLYCOSYL_HYDROL_F22_2"/>
    <property type="match status" value="1"/>
</dbReference>